<feature type="chain" id="PRO_0000234966" description="Serine hydroxymethyltransferase">
    <location>
        <begin position="1"/>
        <end position="438"/>
    </location>
</feature>
<feature type="binding site" evidence="1">
    <location>
        <position position="119"/>
    </location>
    <ligand>
        <name>(6S)-5,6,7,8-tetrahydrofolate</name>
        <dbReference type="ChEBI" id="CHEBI:57453"/>
    </ligand>
</feature>
<feature type="binding site" evidence="1">
    <location>
        <begin position="123"/>
        <end position="125"/>
    </location>
    <ligand>
        <name>(6S)-5,6,7,8-tetrahydrofolate</name>
        <dbReference type="ChEBI" id="CHEBI:57453"/>
    </ligand>
</feature>
<feature type="binding site" evidence="1">
    <location>
        <begin position="370"/>
        <end position="372"/>
    </location>
    <ligand>
        <name>(6S)-5,6,7,8-tetrahydrofolate</name>
        <dbReference type="ChEBI" id="CHEBI:57453"/>
    </ligand>
</feature>
<feature type="site" description="Plays an important role in substrate specificity" evidence="1">
    <location>
        <position position="227"/>
    </location>
</feature>
<feature type="modified residue" description="N6-(pyridoxal phosphate)lysine" evidence="1">
    <location>
        <position position="228"/>
    </location>
</feature>
<organism>
    <name type="scientific">Chlorobium chlorochromatii (strain CaD3)</name>
    <dbReference type="NCBI Taxonomy" id="340177"/>
    <lineage>
        <taxon>Bacteria</taxon>
        <taxon>Pseudomonadati</taxon>
        <taxon>Chlorobiota</taxon>
        <taxon>Chlorobiia</taxon>
        <taxon>Chlorobiales</taxon>
        <taxon>Chlorobiaceae</taxon>
        <taxon>Chlorobium/Pelodictyon group</taxon>
        <taxon>Chlorobium</taxon>
    </lineage>
</organism>
<name>GLYA_CHLCH</name>
<evidence type="ECO:0000255" key="1">
    <source>
        <dbReference type="HAMAP-Rule" id="MF_00051"/>
    </source>
</evidence>
<gene>
    <name evidence="1" type="primary">glyA</name>
    <name type="ordered locus">Cag_1789</name>
</gene>
<sequence length="438" mass="47414">MDTDILQKQDAEVFASIANETKRQTETLELIASENFTSRAVMQACGSVMTNKYAEGYPGKRYYGGCEFVDVAENLARDRAKKLFGCEYVNVQPHSGSSANMAVLFSVLKPGDKIMGLDLSHGGHLTHGSSVNFSGQMFEAHSYGVDRETGCIDMNKVEEMAMQVRPKLIIGGASAYSQGFDFKAFRAIADKVGALLMADIAHPAGLIAAGLLPNPLQHCHFVTTTTHKTLRGPRGGMIMMGSDFENPLGITIKTKTGSRVKMMSEVMDAEVMPGIQGGPLMHIIAGKAVAFGEALQPAFKEYAAQVMKNASTMASRFMELGYTIVSGGTKNHLMLLDLRNKNVTGKEAENLLHEAGITVNKNMVPFDDKSPFVTSGIRIGTPAMTTRGMKEAESRRIAELIDQVITSASKPDISAICEAVREEIKTICHNNPIEGYSV</sequence>
<dbReference type="EC" id="2.1.2.1" evidence="1"/>
<dbReference type="EMBL" id="CP000108">
    <property type="protein sequence ID" value="ABB29040.1"/>
    <property type="molecule type" value="Genomic_DNA"/>
</dbReference>
<dbReference type="SMR" id="Q3APN5"/>
<dbReference type="STRING" id="340177.Cag_1789"/>
<dbReference type="KEGG" id="cch:Cag_1789"/>
<dbReference type="eggNOG" id="COG0112">
    <property type="taxonomic scope" value="Bacteria"/>
</dbReference>
<dbReference type="HOGENOM" id="CLU_022477_2_1_10"/>
<dbReference type="OrthoDB" id="9803846at2"/>
<dbReference type="UniPathway" id="UPA00193"/>
<dbReference type="UniPathway" id="UPA00288">
    <property type="reaction ID" value="UER01023"/>
</dbReference>
<dbReference type="GO" id="GO:0005829">
    <property type="term" value="C:cytosol"/>
    <property type="evidence" value="ECO:0007669"/>
    <property type="project" value="TreeGrafter"/>
</dbReference>
<dbReference type="GO" id="GO:0004372">
    <property type="term" value="F:glycine hydroxymethyltransferase activity"/>
    <property type="evidence" value="ECO:0007669"/>
    <property type="project" value="UniProtKB-UniRule"/>
</dbReference>
<dbReference type="GO" id="GO:0030170">
    <property type="term" value="F:pyridoxal phosphate binding"/>
    <property type="evidence" value="ECO:0007669"/>
    <property type="project" value="UniProtKB-UniRule"/>
</dbReference>
<dbReference type="GO" id="GO:0019264">
    <property type="term" value="P:glycine biosynthetic process from serine"/>
    <property type="evidence" value="ECO:0007669"/>
    <property type="project" value="UniProtKB-UniRule"/>
</dbReference>
<dbReference type="GO" id="GO:0035999">
    <property type="term" value="P:tetrahydrofolate interconversion"/>
    <property type="evidence" value="ECO:0007669"/>
    <property type="project" value="UniProtKB-UniRule"/>
</dbReference>
<dbReference type="CDD" id="cd00378">
    <property type="entry name" value="SHMT"/>
    <property type="match status" value="1"/>
</dbReference>
<dbReference type="FunFam" id="3.40.640.10:FF:000001">
    <property type="entry name" value="Serine hydroxymethyltransferase"/>
    <property type="match status" value="1"/>
</dbReference>
<dbReference type="Gene3D" id="3.90.1150.10">
    <property type="entry name" value="Aspartate Aminotransferase, domain 1"/>
    <property type="match status" value="1"/>
</dbReference>
<dbReference type="Gene3D" id="3.40.640.10">
    <property type="entry name" value="Type I PLP-dependent aspartate aminotransferase-like (Major domain)"/>
    <property type="match status" value="1"/>
</dbReference>
<dbReference type="HAMAP" id="MF_00051">
    <property type="entry name" value="SHMT"/>
    <property type="match status" value="1"/>
</dbReference>
<dbReference type="InterPro" id="IPR015424">
    <property type="entry name" value="PyrdxlP-dep_Trfase"/>
</dbReference>
<dbReference type="InterPro" id="IPR015421">
    <property type="entry name" value="PyrdxlP-dep_Trfase_major"/>
</dbReference>
<dbReference type="InterPro" id="IPR015422">
    <property type="entry name" value="PyrdxlP-dep_Trfase_small"/>
</dbReference>
<dbReference type="InterPro" id="IPR001085">
    <property type="entry name" value="Ser_HO-MeTrfase"/>
</dbReference>
<dbReference type="InterPro" id="IPR049943">
    <property type="entry name" value="Ser_HO-MeTrfase-like"/>
</dbReference>
<dbReference type="InterPro" id="IPR019798">
    <property type="entry name" value="Ser_HO-MeTrfase_PLP_BS"/>
</dbReference>
<dbReference type="InterPro" id="IPR039429">
    <property type="entry name" value="SHMT-like_dom"/>
</dbReference>
<dbReference type="NCBIfam" id="NF000586">
    <property type="entry name" value="PRK00011.1"/>
    <property type="match status" value="1"/>
</dbReference>
<dbReference type="PANTHER" id="PTHR11680">
    <property type="entry name" value="SERINE HYDROXYMETHYLTRANSFERASE"/>
    <property type="match status" value="1"/>
</dbReference>
<dbReference type="PANTHER" id="PTHR11680:SF35">
    <property type="entry name" value="SERINE HYDROXYMETHYLTRANSFERASE 1"/>
    <property type="match status" value="1"/>
</dbReference>
<dbReference type="Pfam" id="PF00464">
    <property type="entry name" value="SHMT"/>
    <property type="match status" value="1"/>
</dbReference>
<dbReference type="PIRSF" id="PIRSF000412">
    <property type="entry name" value="SHMT"/>
    <property type="match status" value="1"/>
</dbReference>
<dbReference type="SUPFAM" id="SSF53383">
    <property type="entry name" value="PLP-dependent transferases"/>
    <property type="match status" value="1"/>
</dbReference>
<dbReference type="PROSITE" id="PS00096">
    <property type="entry name" value="SHMT"/>
    <property type="match status" value="1"/>
</dbReference>
<keyword id="KW-0028">Amino-acid biosynthesis</keyword>
<keyword id="KW-0963">Cytoplasm</keyword>
<keyword id="KW-0554">One-carbon metabolism</keyword>
<keyword id="KW-0663">Pyridoxal phosphate</keyword>
<keyword id="KW-0808">Transferase</keyword>
<comment type="function">
    <text evidence="1">Catalyzes the reversible interconversion of serine and glycine with tetrahydrofolate (THF) serving as the one-carbon carrier. This reaction serves as the major source of one-carbon groups required for the biosynthesis of purines, thymidylate, methionine, and other important biomolecules. Also exhibits THF-independent aldolase activity toward beta-hydroxyamino acids, producing glycine and aldehydes, via a retro-aldol mechanism.</text>
</comment>
<comment type="catalytic activity">
    <reaction evidence="1">
        <text>(6R)-5,10-methylene-5,6,7,8-tetrahydrofolate + glycine + H2O = (6S)-5,6,7,8-tetrahydrofolate + L-serine</text>
        <dbReference type="Rhea" id="RHEA:15481"/>
        <dbReference type="ChEBI" id="CHEBI:15377"/>
        <dbReference type="ChEBI" id="CHEBI:15636"/>
        <dbReference type="ChEBI" id="CHEBI:33384"/>
        <dbReference type="ChEBI" id="CHEBI:57305"/>
        <dbReference type="ChEBI" id="CHEBI:57453"/>
        <dbReference type="EC" id="2.1.2.1"/>
    </reaction>
</comment>
<comment type="cofactor">
    <cofactor evidence="1">
        <name>pyridoxal 5'-phosphate</name>
        <dbReference type="ChEBI" id="CHEBI:597326"/>
    </cofactor>
</comment>
<comment type="pathway">
    <text evidence="1">One-carbon metabolism; tetrahydrofolate interconversion.</text>
</comment>
<comment type="pathway">
    <text evidence="1">Amino-acid biosynthesis; glycine biosynthesis; glycine from L-serine: step 1/1.</text>
</comment>
<comment type="subunit">
    <text evidence="1">Homodimer.</text>
</comment>
<comment type="subcellular location">
    <subcellularLocation>
        <location evidence="1">Cytoplasm</location>
    </subcellularLocation>
</comment>
<comment type="similarity">
    <text evidence="1">Belongs to the SHMT family.</text>
</comment>
<accession>Q3APN5</accession>
<proteinExistence type="inferred from homology"/>
<protein>
    <recommendedName>
        <fullName evidence="1">Serine hydroxymethyltransferase</fullName>
        <shortName evidence="1">SHMT</shortName>
        <shortName evidence="1">Serine methylase</shortName>
        <ecNumber evidence="1">2.1.2.1</ecNumber>
    </recommendedName>
</protein>
<reference key="1">
    <citation type="submission" date="2005-08" db="EMBL/GenBank/DDBJ databases">
        <title>Complete sequence of Chlorobium chlorochromatii CaD3.</title>
        <authorList>
            <consortium name="US DOE Joint Genome Institute"/>
            <person name="Copeland A."/>
            <person name="Lucas S."/>
            <person name="Lapidus A."/>
            <person name="Barry K."/>
            <person name="Detter J.C."/>
            <person name="Glavina T."/>
            <person name="Hammon N."/>
            <person name="Israni S."/>
            <person name="Pitluck S."/>
            <person name="Bryant D."/>
            <person name="Schmutz J."/>
            <person name="Larimer F."/>
            <person name="Land M."/>
            <person name="Kyrpides N."/>
            <person name="Ivanova N."/>
            <person name="Richardson P."/>
        </authorList>
    </citation>
    <scope>NUCLEOTIDE SEQUENCE [LARGE SCALE GENOMIC DNA]</scope>
    <source>
        <strain>CaD3</strain>
    </source>
</reference>